<proteinExistence type="inferred from homology"/>
<name>CMOB_SHIB3</name>
<keyword id="KW-1185">Reference proteome</keyword>
<keyword id="KW-0808">Transferase</keyword>
<keyword id="KW-0819">tRNA processing</keyword>
<comment type="function">
    <text evidence="1">Catalyzes carboxymethyl transfer from carboxy-S-adenosyl-L-methionine (Cx-SAM) to 5-hydroxyuridine (ho5U) to form 5-carboxymethoxyuridine (cmo5U) at position 34 in tRNAs.</text>
</comment>
<comment type="catalytic activity">
    <reaction evidence="1">
        <text>carboxy-S-adenosyl-L-methionine + 5-hydroxyuridine(34) in tRNA = 5-carboxymethoxyuridine(34) in tRNA + S-adenosyl-L-homocysteine + H(+)</text>
        <dbReference type="Rhea" id="RHEA:52848"/>
        <dbReference type="Rhea" id="RHEA-COMP:13381"/>
        <dbReference type="Rhea" id="RHEA-COMP:13383"/>
        <dbReference type="ChEBI" id="CHEBI:15378"/>
        <dbReference type="ChEBI" id="CHEBI:57856"/>
        <dbReference type="ChEBI" id="CHEBI:134278"/>
        <dbReference type="ChEBI" id="CHEBI:136877"/>
        <dbReference type="ChEBI" id="CHEBI:136879"/>
    </reaction>
</comment>
<comment type="subunit">
    <text evidence="1">Homotetramer.</text>
</comment>
<comment type="similarity">
    <text evidence="1">Belongs to the class I-like SAM-binding methyltransferase superfamily. CmoB family.</text>
</comment>
<gene>
    <name evidence="1" type="primary">cmoB</name>
    <name type="ordered locus">SbBS512_E2164</name>
</gene>
<dbReference type="EC" id="2.5.1.-" evidence="1"/>
<dbReference type="EMBL" id="CP001063">
    <property type="protein sequence ID" value="ACD10384.1"/>
    <property type="molecule type" value="Genomic_DNA"/>
</dbReference>
<dbReference type="RefSeq" id="WP_000564746.1">
    <property type="nucleotide sequence ID" value="NC_010658.1"/>
</dbReference>
<dbReference type="SMR" id="B2U4X2"/>
<dbReference type="STRING" id="344609.SbBS512_E2164"/>
<dbReference type="KEGG" id="sbc:SbBS512_E2164"/>
<dbReference type="HOGENOM" id="CLU_052665_0_0_6"/>
<dbReference type="Proteomes" id="UP000001030">
    <property type="component" value="Chromosome"/>
</dbReference>
<dbReference type="GO" id="GO:0016765">
    <property type="term" value="F:transferase activity, transferring alkyl or aryl (other than methyl) groups"/>
    <property type="evidence" value="ECO:0007669"/>
    <property type="project" value="UniProtKB-UniRule"/>
</dbReference>
<dbReference type="GO" id="GO:0002098">
    <property type="term" value="P:tRNA wobble uridine modification"/>
    <property type="evidence" value="ECO:0007669"/>
    <property type="project" value="InterPro"/>
</dbReference>
<dbReference type="CDD" id="cd02440">
    <property type="entry name" value="AdoMet_MTases"/>
    <property type="match status" value="1"/>
</dbReference>
<dbReference type="FunFam" id="3.40.50.150:FF:000080">
    <property type="entry name" value="tRNA U34 carboxymethyltransferase"/>
    <property type="match status" value="1"/>
</dbReference>
<dbReference type="Gene3D" id="3.40.50.150">
    <property type="entry name" value="Vaccinia Virus protein VP39"/>
    <property type="match status" value="1"/>
</dbReference>
<dbReference type="HAMAP" id="MF_01590">
    <property type="entry name" value="tRNA_carboxymethyltr_CmoB"/>
    <property type="match status" value="1"/>
</dbReference>
<dbReference type="InterPro" id="IPR010017">
    <property type="entry name" value="CmoB"/>
</dbReference>
<dbReference type="InterPro" id="IPR027555">
    <property type="entry name" value="Mo5U34_MeTrfas-like"/>
</dbReference>
<dbReference type="InterPro" id="IPR029063">
    <property type="entry name" value="SAM-dependent_MTases_sf"/>
</dbReference>
<dbReference type="NCBIfam" id="NF011650">
    <property type="entry name" value="PRK15068.1"/>
    <property type="match status" value="1"/>
</dbReference>
<dbReference type="NCBIfam" id="TIGR00452">
    <property type="entry name" value="tRNA 5-methoxyuridine(34)/uridine 5-oxyacetic acid(34) synthase CmoB"/>
    <property type="match status" value="1"/>
</dbReference>
<dbReference type="PANTHER" id="PTHR43861:SF3">
    <property type="entry name" value="PUTATIVE (AFU_ORTHOLOGUE AFUA_2G14390)-RELATED"/>
    <property type="match status" value="1"/>
</dbReference>
<dbReference type="PANTHER" id="PTHR43861">
    <property type="entry name" value="TRANS-ACONITATE 2-METHYLTRANSFERASE-RELATED"/>
    <property type="match status" value="1"/>
</dbReference>
<dbReference type="Pfam" id="PF08003">
    <property type="entry name" value="Methyltransf_9"/>
    <property type="match status" value="1"/>
</dbReference>
<dbReference type="SUPFAM" id="SSF53335">
    <property type="entry name" value="S-adenosyl-L-methionine-dependent methyltransferases"/>
    <property type="match status" value="1"/>
</dbReference>
<evidence type="ECO:0000255" key="1">
    <source>
        <dbReference type="HAMAP-Rule" id="MF_01590"/>
    </source>
</evidence>
<accession>B2U4X2</accession>
<protein>
    <recommendedName>
        <fullName evidence="1">tRNA U34 carboxymethyltransferase</fullName>
        <ecNumber evidence="1">2.5.1.-</ecNumber>
    </recommendedName>
</protein>
<organism>
    <name type="scientific">Shigella boydii serotype 18 (strain CDC 3083-94 / BS512)</name>
    <dbReference type="NCBI Taxonomy" id="344609"/>
    <lineage>
        <taxon>Bacteria</taxon>
        <taxon>Pseudomonadati</taxon>
        <taxon>Pseudomonadota</taxon>
        <taxon>Gammaproteobacteria</taxon>
        <taxon>Enterobacterales</taxon>
        <taxon>Enterobacteriaceae</taxon>
        <taxon>Shigella</taxon>
    </lineage>
</organism>
<sequence length="323" mass="37113">MIDFGNFYSLIAKNHLSHWLETLPAQIANWQREQQHGLFKQWSNAVEFLPEIKPYRLDLLHSVTAESEEPLSTGQIKRIETLMRNLMPWRKGPFSLYGVNIDTEWRSDWKWDRVLPHLSDLTGRTILDVGCGSGYHMWRMIGAGAHLAVGIDPTQLFLCQFEAVRKLLGNDQRAHLLPLGIEQLPALKAFDTVFSMGVLYHRRSPLEHLWQLKDQLVNEGELVLETLVIDGDENTVLVPGDRYAQMRNVYFIPSALALKNWLKKCGFVDIRVVDVCVTTTEEQRRTEWMVTESLSDFLDPHDPSKTVEGYPAPKRAVLIARKP</sequence>
<feature type="chain" id="PRO_1000201314" description="tRNA U34 carboxymethyltransferase">
    <location>
        <begin position="1"/>
        <end position="323"/>
    </location>
</feature>
<feature type="binding site" evidence="1">
    <location>
        <position position="91"/>
    </location>
    <ligand>
        <name>carboxy-S-adenosyl-L-methionine</name>
        <dbReference type="ChEBI" id="CHEBI:134278"/>
    </ligand>
</feature>
<feature type="binding site" evidence="1">
    <location>
        <position position="105"/>
    </location>
    <ligand>
        <name>carboxy-S-adenosyl-L-methionine</name>
        <dbReference type="ChEBI" id="CHEBI:134278"/>
    </ligand>
</feature>
<feature type="binding site" evidence="1">
    <location>
        <position position="110"/>
    </location>
    <ligand>
        <name>carboxy-S-adenosyl-L-methionine</name>
        <dbReference type="ChEBI" id="CHEBI:134278"/>
    </ligand>
</feature>
<feature type="binding site" evidence="1">
    <location>
        <position position="130"/>
    </location>
    <ligand>
        <name>carboxy-S-adenosyl-L-methionine</name>
        <dbReference type="ChEBI" id="CHEBI:134278"/>
    </ligand>
</feature>
<feature type="binding site" evidence="1">
    <location>
        <begin position="152"/>
        <end position="154"/>
    </location>
    <ligand>
        <name>carboxy-S-adenosyl-L-methionine</name>
        <dbReference type="ChEBI" id="CHEBI:134278"/>
    </ligand>
</feature>
<feature type="binding site" evidence="1">
    <location>
        <begin position="181"/>
        <end position="182"/>
    </location>
    <ligand>
        <name>carboxy-S-adenosyl-L-methionine</name>
        <dbReference type="ChEBI" id="CHEBI:134278"/>
    </ligand>
</feature>
<feature type="binding site" evidence="1">
    <location>
        <position position="196"/>
    </location>
    <ligand>
        <name>carboxy-S-adenosyl-L-methionine</name>
        <dbReference type="ChEBI" id="CHEBI:134278"/>
    </ligand>
</feature>
<feature type="binding site" evidence="1">
    <location>
        <position position="200"/>
    </location>
    <ligand>
        <name>carboxy-S-adenosyl-L-methionine</name>
        <dbReference type="ChEBI" id="CHEBI:134278"/>
    </ligand>
</feature>
<feature type="binding site" evidence="1">
    <location>
        <position position="315"/>
    </location>
    <ligand>
        <name>carboxy-S-adenosyl-L-methionine</name>
        <dbReference type="ChEBI" id="CHEBI:134278"/>
    </ligand>
</feature>
<reference key="1">
    <citation type="submission" date="2008-05" db="EMBL/GenBank/DDBJ databases">
        <title>Complete sequence of Shigella boydii serotype 18 strain BS512.</title>
        <authorList>
            <person name="Rasko D.A."/>
            <person name="Rosovitz M."/>
            <person name="Maurelli A.T."/>
            <person name="Myers G."/>
            <person name="Seshadri R."/>
            <person name="Cer R."/>
            <person name="Jiang L."/>
            <person name="Ravel J."/>
            <person name="Sebastian Y."/>
        </authorList>
    </citation>
    <scope>NUCLEOTIDE SEQUENCE [LARGE SCALE GENOMIC DNA]</scope>
    <source>
        <strain>CDC 3083-94 / BS512</strain>
    </source>
</reference>